<gene>
    <name evidence="1" type="primary">ATP5MG</name>
    <name type="synonym">ATP5L</name>
</gene>
<keyword id="KW-0002">3D-structure</keyword>
<keyword id="KW-0007">Acetylation</keyword>
<keyword id="KW-0066">ATP synthesis</keyword>
<keyword id="KW-0138">CF(0)</keyword>
<keyword id="KW-0903">Direct protein sequencing</keyword>
<keyword id="KW-0375">Hydrogen ion transport</keyword>
<keyword id="KW-0406">Ion transport</keyword>
<keyword id="KW-0472">Membrane</keyword>
<keyword id="KW-0496">Mitochondrion</keyword>
<keyword id="KW-0999">Mitochondrion inner membrane</keyword>
<keyword id="KW-1185">Reference proteome</keyword>
<keyword id="KW-0813">Transport</keyword>
<sequence>MAEFVRNLAEKAPALVNAAVTYSKPRLATFWYYAKVELVPPTPAEIPTAIQSLKKIINSAKTGSFKQLTVKEALLNGLVATEVWMWFYVGEIIGKRGIIGYDV</sequence>
<proteinExistence type="evidence at protein level"/>
<reference key="1">
    <citation type="journal article" date="1994" name="Biochemistry">
        <title>F0 membrane domain of ATP synthase from bovine heart mitochondria: purification, subunit composition, and reconstitution with F1-ATPase.</title>
        <authorList>
            <person name="Collinson I.R."/>
            <person name="Runswick M.J."/>
            <person name="Buchanan S.K."/>
            <person name="Fearnley I.M."/>
            <person name="Skehel J.M."/>
            <person name="van Raaij M.J."/>
            <person name="Griffiths D.E."/>
            <person name="Walker J.E."/>
        </authorList>
    </citation>
    <scope>NUCLEOTIDE SEQUENCE [MRNA]</scope>
    <scope>PROTEIN SEQUENCE OF 2-103</scope>
    <scope>MASS SPECTROMETRY</scope>
    <source>
        <tissue>Heart</tissue>
    </source>
</reference>
<reference key="2">
    <citation type="submission" date="2012-01" db="EMBL/GenBank/DDBJ databases">
        <authorList>
            <person name="Collinson I.R."/>
            <person name="Runswick M.J."/>
            <person name="Buchanan S.K."/>
            <person name="Fearnley I.M."/>
            <person name="Skehel J.M."/>
            <person name="van Raaij M.J."/>
            <person name="Griffiths D.E."/>
            <person name="Walker J.E."/>
        </authorList>
    </citation>
    <scope>SEQUENCE REVISION TO 93</scope>
</reference>
<reference key="3">
    <citation type="submission" date="2005-08" db="EMBL/GenBank/DDBJ databases">
        <authorList>
            <consortium name="NIH - Mammalian Gene Collection (MGC) project"/>
        </authorList>
    </citation>
    <scope>NUCLEOTIDE SEQUENCE [LARGE SCALE MRNA]</scope>
    <source>
        <strain>Crossbred X Angus</strain>
        <tissue>Ileum</tissue>
    </source>
</reference>
<reference key="4">
    <citation type="journal article" date="2007" name="FEBS Lett.">
        <title>Association of two proteolipids of unknown function with ATP synthase from bovine heart mitochondria.</title>
        <authorList>
            <person name="Chen R."/>
            <person name="Runswick M.J."/>
            <person name="Carroll J."/>
            <person name="Fearnley I.M."/>
            <person name="Walker J.E."/>
        </authorList>
    </citation>
    <scope>IDENTIFICATION IN THE ATP SYNTHASE COMPLEX</scope>
</reference>
<organism>
    <name type="scientific">Bos taurus</name>
    <name type="common">Bovine</name>
    <dbReference type="NCBI Taxonomy" id="9913"/>
    <lineage>
        <taxon>Eukaryota</taxon>
        <taxon>Metazoa</taxon>
        <taxon>Chordata</taxon>
        <taxon>Craniata</taxon>
        <taxon>Vertebrata</taxon>
        <taxon>Euteleostomi</taxon>
        <taxon>Mammalia</taxon>
        <taxon>Eutheria</taxon>
        <taxon>Laurasiatheria</taxon>
        <taxon>Artiodactyla</taxon>
        <taxon>Ruminantia</taxon>
        <taxon>Pecora</taxon>
        <taxon>Bovidae</taxon>
        <taxon>Bovinae</taxon>
        <taxon>Bos</taxon>
    </lineage>
</organism>
<comment type="function">
    <text evidence="1 2">Subunit g, of the mitochondrial membrane ATP synthase complex (F(1)F(0) ATP synthase or Complex V) that produces ATP from ADP in the presence of a proton gradient across the membrane which is generated by electron transport complexes of the respiratory chain. ATP synthase complex consist of a soluble F(1) head domain - the catalytic core - and a membrane F(1) domain - the membrane proton channel. These two domains are linked by a central stalk rotating inside the F(1) region and a stationary peripheral stalk. During catalysis, ATP synthesis in the catalytic domain of F(1) is coupled via a rotary mechanism of the central stalk subunits to proton translocation (By similarity). In vivo, can only synthesize ATP although its ATP hydrolase activity can be activated artificially in vitro (By similarity). Part of the complex F(0) domain (By similarity).</text>
</comment>
<comment type="subunit">
    <text evidence="1 4">Component of the ATP synthase complex composed at least of ATP5F1A/subunit alpha, ATP5F1B/subunit beta, ATP5MC1/subunit c (homooctomer), MT-ATP6/subunit a, MT-ATP8/subunit 8, ATP5ME/subunit e, ATP5MF/subunit f, ATP5MG/subunit g, ATP5MK/subunit k, ATP5MJ/subunit j, ATP5F1C/subunit gamma, ATP5F1D/subunit delta, ATP5F1E/subunit epsilon, ATP5PF/subunit F6, ATP5PB/subunit b, ATP5PD/subunit d, ATP5PO/subunit OSCP (PubMed:17570365). ATP synthase complex consists of a soluble F(1) head domain (subunits alpha(3) and beta(3)) - the catalytic core - and a membrane F(0) domain - the membrane proton channel (subunits c, a, 8, e, f, g, k and j). These two domains are linked by a central stalk (subunits gamma, delta, and epsilon) rotating inside the F1 region and a stationary peripheral stalk (subunits F6, b, d, and OSCP) (By similarity).</text>
</comment>
<comment type="subcellular location">
    <subcellularLocation>
        <location>Mitochondrion</location>
    </subcellularLocation>
    <subcellularLocation>
        <location>Mitochondrion inner membrane</location>
    </subcellularLocation>
</comment>
<comment type="mass spectrometry"/>
<comment type="similarity">
    <text evidence="6">Belongs to the ATPase g subunit family.</text>
</comment>
<evidence type="ECO:0000250" key="1">
    <source>
        <dbReference type="UniProtKB" id="O75964"/>
    </source>
</evidence>
<evidence type="ECO:0000250" key="2">
    <source>
        <dbReference type="UniProtKB" id="P19483"/>
    </source>
</evidence>
<evidence type="ECO:0000250" key="3">
    <source>
        <dbReference type="UniProtKB" id="Q9CPQ8"/>
    </source>
</evidence>
<evidence type="ECO:0000269" key="4">
    <source>
    </source>
</evidence>
<evidence type="ECO:0000269" key="5">
    <source>
    </source>
</evidence>
<evidence type="ECO:0000305" key="6"/>
<evidence type="ECO:0007829" key="7">
    <source>
        <dbReference type="PDB" id="6ZIT"/>
    </source>
</evidence>
<name>ATP5L_BOVIN</name>
<feature type="initiator methionine" description="Removed" evidence="1 5">
    <location>
        <position position="1"/>
    </location>
</feature>
<feature type="chain" id="PRO_0000071690" description="ATP synthase F(0) complex subunit g, mitochondrial">
    <location>
        <begin position="2"/>
        <end position="103"/>
    </location>
</feature>
<feature type="modified residue" description="N-acetylalanine" evidence="1">
    <location>
        <position position="2"/>
    </location>
</feature>
<feature type="modified residue" description="N6-acetyllysine" evidence="3">
    <location>
        <position position="11"/>
    </location>
</feature>
<feature type="modified residue" description="N6-acetyllysine" evidence="1">
    <location>
        <position position="24"/>
    </location>
</feature>
<feature type="modified residue" description="N6-acetyllysine" evidence="3">
    <location>
        <position position="35"/>
    </location>
</feature>
<feature type="modified residue" description="N6-acetyllysine" evidence="3">
    <location>
        <position position="54"/>
    </location>
</feature>
<feature type="sequence conflict" description="In Ref. 3; AAI02456." evidence="6" ref="3">
    <original>E</original>
    <variation>Q</variation>
    <location>
        <position position="3"/>
    </location>
</feature>
<feature type="helix" evidence="7">
    <location>
        <begin position="23"/>
        <end position="36"/>
    </location>
</feature>
<feature type="helix" evidence="7">
    <location>
        <begin position="45"/>
        <end position="61"/>
    </location>
</feature>
<feature type="helix" evidence="7">
    <location>
        <begin position="64"/>
        <end position="67"/>
    </location>
</feature>
<feature type="helix" evidence="7">
    <location>
        <begin position="70"/>
        <end position="94"/>
    </location>
</feature>
<feature type="strand" evidence="7">
    <location>
        <begin position="95"/>
        <end position="97"/>
    </location>
</feature>
<protein>
    <recommendedName>
        <fullName evidence="1">ATP synthase F(0) complex subunit g, mitochondrial</fullName>
        <shortName>ATPase subunit g</shortName>
    </recommendedName>
    <alternativeName>
        <fullName evidence="6">ATP synthase membrane subunit g</fullName>
    </alternativeName>
</protein>
<accession>Q28852</accession>
<accession>Q3T0C5</accession>
<dbReference type="EMBL" id="S70448">
    <property type="protein sequence ID" value="AAB31108.3"/>
    <property type="molecule type" value="mRNA"/>
</dbReference>
<dbReference type="EMBL" id="BC102455">
    <property type="protein sequence ID" value="AAI02456.1"/>
    <property type="molecule type" value="mRNA"/>
</dbReference>
<dbReference type="PIR" id="B54211">
    <property type="entry name" value="B54211"/>
</dbReference>
<dbReference type="RefSeq" id="NP_001019721.4">
    <property type="nucleotide sequence ID" value="NM_001024550.4"/>
</dbReference>
<dbReference type="PDB" id="6ZBB">
    <property type="method" value="EM"/>
    <property type="resolution" value="3.61 A"/>
    <property type="chains" value="g=2-103"/>
</dbReference>
<dbReference type="PDB" id="6ZIQ">
    <property type="method" value="EM"/>
    <property type="resolution" value="4.33 A"/>
    <property type="chains" value="g=2-103"/>
</dbReference>
<dbReference type="PDB" id="6ZIT">
    <property type="method" value="EM"/>
    <property type="resolution" value="3.49 A"/>
    <property type="chains" value="g=2-103"/>
</dbReference>
<dbReference type="PDB" id="6ZIU">
    <property type="method" value="EM"/>
    <property type="resolution" value="6.02 A"/>
    <property type="chains" value="g=2-103"/>
</dbReference>
<dbReference type="PDB" id="6ZPO">
    <property type="method" value="EM"/>
    <property type="resolution" value="4.00 A"/>
    <property type="chains" value="g=2-103"/>
</dbReference>
<dbReference type="PDB" id="6ZQM">
    <property type="method" value="EM"/>
    <property type="resolution" value="3.29 A"/>
    <property type="chains" value="g=2-103"/>
</dbReference>
<dbReference type="PDB" id="6ZQN">
    <property type="method" value="EM"/>
    <property type="resolution" value="4.00 A"/>
    <property type="chains" value="g=2-103"/>
</dbReference>
<dbReference type="PDB" id="7AJB">
    <property type="method" value="EM"/>
    <property type="resolution" value="9.20 A"/>
    <property type="chains" value="Ag/g=2-103"/>
</dbReference>
<dbReference type="PDB" id="7AJC">
    <property type="method" value="EM"/>
    <property type="resolution" value="11.90 A"/>
    <property type="chains" value="Ag/g=2-103"/>
</dbReference>
<dbReference type="PDB" id="7AJD">
    <property type="method" value="EM"/>
    <property type="resolution" value="9.00 A"/>
    <property type="chains" value="Ag/g=2-103"/>
</dbReference>
<dbReference type="PDB" id="7AJE">
    <property type="method" value="EM"/>
    <property type="resolution" value="9.40 A"/>
    <property type="chains" value="Ag/g=2-103"/>
</dbReference>
<dbReference type="PDB" id="7AJF">
    <property type="method" value="EM"/>
    <property type="resolution" value="8.45 A"/>
    <property type="chains" value="Ag/g=2-103"/>
</dbReference>
<dbReference type="PDB" id="7AJG">
    <property type="method" value="EM"/>
    <property type="resolution" value="10.70 A"/>
    <property type="chains" value="Ag/g=2-103"/>
</dbReference>
<dbReference type="PDB" id="7AJH">
    <property type="method" value="EM"/>
    <property type="resolution" value="9.70 A"/>
    <property type="chains" value="Ag/g=2-103"/>
</dbReference>
<dbReference type="PDB" id="7AJI">
    <property type="method" value="EM"/>
    <property type="resolution" value="11.40 A"/>
    <property type="chains" value="Ag/g=2-103"/>
</dbReference>
<dbReference type="PDB" id="7AJJ">
    <property type="method" value="EM"/>
    <property type="resolution" value="13.10 A"/>
    <property type="chains" value="Ag/g=2-103"/>
</dbReference>
<dbReference type="PDBsum" id="6ZBB"/>
<dbReference type="PDBsum" id="6ZIQ"/>
<dbReference type="PDBsum" id="6ZIT"/>
<dbReference type="PDBsum" id="6ZIU"/>
<dbReference type="PDBsum" id="6ZPO"/>
<dbReference type="PDBsum" id="6ZQM"/>
<dbReference type="PDBsum" id="6ZQN"/>
<dbReference type="PDBsum" id="7AJB"/>
<dbReference type="PDBsum" id="7AJC"/>
<dbReference type="PDBsum" id="7AJD"/>
<dbReference type="PDBsum" id="7AJE"/>
<dbReference type="PDBsum" id="7AJF"/>
<dbReference type="PDBsum" id="7AJG"/>
<dbReference type="PDBsum" id="7AJH"/>
<dbReference type="PDBsum" id="7AJI"/>
<dbReference type="PDBsum" id="7AJJ"/>
<dbReference type="EMDB" id="EMD-11149"/>
<dbReference type="EMDB" id="EMD-11228"/>
<dbReference type="EMDB" id="EMD-11229"/>
<dbReference type="EMDB" id="EMD-11230"/>
<dbReference type="EMDB" id="EMD-11342"/>
<dbReference type="EMDB" id="EMD-11368"/>
<dbReference type="EMDB" id="EMD-11369"/>
<dbReference type="EMDB" id="EMD-11428"/>
<dbReference type="EMDB" id="EMD-11429"/>
<dbReference type="EMDB" id="EMD-11430"/>
<dbReference type="SMR" id="Q28852"/>
<dbReference type="CORUM" id="Q28852"/>
<dbReference type="FunCoup" id="Q28852">
    <property type="interactions" value="1143"/>
</dbReference>
<dbReference type="IntAct" id="Q28852">
    <property type="interactions" value="1"/>
</dbReference>
<dbReference type="MINT" id="Q28852"/>
<dbReference type="STRING" id="9913.ENSBTAP00000009643"/>
<dbReference type="PaxDb" id="9913-ENSBTAP00000009643"/>
<dbReference type="PeptideAtlas" id="Q28852"/>
<dbReference type="GeneID" id="515696"/>
<dbReference type="KEGG" id="bta:515696"/>
<dbReference type="CTD" id="10632"/>
<dbReference type="eggNOG" id="KOG4103">
    <property type="taxonomic scope" value="Eukaryota"/>
</dbReference>
<dbReference type="HOGENOM" id="CLU_152793_1_1_1"/>
<dbReference type="InParanoid" id="Q28852"/>
<dbReference type="OrthoDB" id="437at2759"/>
<dbReference type="TreeFam" id="TF313978"/>
<dbReference type="Proteomes" id="UP000009136">
    <property type="component" value="Unplaced"/>
</dbReference>
<dbReference type="GO" id="GO:0005743">
    <property type="term" value="C:mitochondrial inner membrane"/>
    <property type="evidence" value="ECO:0007669"/>
    <property type="project" value="UniProtKB-SubCell"/>
</dbReference>
<dbReference type="GO" id="GO:0005739">
    <property type="term" value="C:mitochondrion"/>
    <property type="evidence" value="ECO:0000305"/>
    <property type="project" value="UniProtKB"/>
</dbReference>
<dbReference type="GO" id="GO:0045259">
    <property type="term" value="C:proton-transporting ATP synthase complex"/>
    <property type="evidence" value="ECO:0000314"/>
    <property type="project" value="UniProtKB"/>
</dbReference>
<dbReference type="GO" id="GO:0015078">
    <property type="term" value="F:proton transmembrane transporter activity"/>
    <property type="evidence" value="ECO:0007669"/>
    <property type="project" value="InterPro"/>
</dbReference>
<dbReference type="GO" id="GO:0015986">
    <property type="term" value="P:proton motive force-driven ATP synthesis"/>
    <property type="evidence" value="ECO:0000318"/>
    <property type="project" value="GO_Central"/>
</dbReference>
<dbReference type="InterPro" id="IPR006808">
    <property type="entry name" value="ATP_synth_F0_gsu_mt"/>
</dbReference>
<dbReference type="InterPro" id="IPR016702">
    <property type="entry name" value="ATP_synth_su_G_mt_met"/>
</dbReference>
<dbReference type="PANTHER" id="PTHR12386">
    <property type="entry name" value="ATP SYNTHASE SUBUNIT"/>
    <property type="match status" value="1"/>
</dbReference>
<dbReference type="Pfam" id="PF04718">
    <property type="entry name" value="ATP-synt_G"/>
    <property type="match status" value="1"/>
</dbReference>
<dbReference type="PIRSF" id="PIRSF017835">
    <property type="entry name" value="ATP-synth_g_mitoch_animal"/>
    <property type="match status" value="1"/>
</dbReference>